<sequence>MGKYFGTDGVRGVANQELTPELAFKLGRYGGYVLAHNKGEKHPRVLVGRDTRVSGEMLESALIAGLISIGAEVMRLGIISTPGVAYLTRDMGAELGVMISASHNPVADNGIKFFGSDGFKLSDEQENEIEALLDQENPELPRPVGNDIVHYSDYFEGAQKYLSYLKSTVDVNFEGLKIVLDGANGSTSSLAPFLFGDLEADTETIGCSPDGYNINEKCGSTHPEKLAEKVVETESDFGLAFDGDGDRIIAVDENGQIVDGDQIMFIIGQEMHKNQELNNDMIVSTVMSNLGFYKALEQEGIKSNKTKVGDRYVVEEMRRGNYNLGGEQSGHIVMMDYNTTGDGLLTGIQLASVIKMTGKSLSELAGQMKKYPQSLINVRVTDKYRVEENVDVKEVMTKVEVEMNGEGRILVRPSGTEPLVRVMVEAATDEDAERFAQQIADVVQDKMGLDK</sequence>
<gene>
    <name evidence="1" type="primary">glmM</name>
    <name type="ordered locus">SaurJH1_2231</name>
</gene>
<dbReference type="EC" id="5.4.2.10" evidence="1"/>
<dbReference type="EMBL" id="CP000736">
    <property type="protein sequence ID" value="ABR53059.1"/>
    <property type="molecule type" value="Genomic_DNA"/>
</dbReference>
<dbReference type="SMR" id="A6U3P1"/>
<dbReference type="KEGG" id="sah:SaurJH1_2231"/>
<dbReference type="HOGENOM" id="CLU_016950_7_0_9"/>
<dbReference type="GO" id="GO:0005829">
    <property type="term" value="C:cytosol"/>
    <property type="evidence" value="ECO:0007669"/>
    <property type="project" value="TreeGrafter"/>
</dbReference>
<dbReference type="GO" id="GO:0000287">
    <property type="term" value="F:magnesium ion binding"/>
    <property type="evidence" value="ECO:0007669"/>
    <property type="project" value="UniProtKB-UniRule"/>
</dbReference>
<dbReference type="GO" id="GO:0008966">
    <property type="term" value="F:phosphoglucosamine mutase activity"/>
    <property type="evidence" value="ECO:0007669"/>
    <property type="project" value="UniProtKB-UniRule"/>
</dbReference>
<dbReference type="GO" id="GO:0004615">
    <property type="term" value="F:phosphomannomutase activity"/>
    <property type="evidence" value="ECO:0007669"/>
    <property type="project" value="TreeGrafter"/>
</dbReference>
<dbReference type="GO" id="GO:0005975">
    <property type="term" value="P:carbohydrate metabolic process"/>
    <property type="evidence" value="ECO:0007669"/>
    <property type="project" value="InterPro"/>
</dbReference>
<dbReference type="GO" id="GO:0009252">
    <property type="term" value="P:peptidoglycan biosynthetic process"/>
    <property type="evidence" value="ECO:0007669"/>
    <property type="project" value="TreeGrafter"/>
</dbReference>
<dbReference type="GO" id="GO:0006048">
    <property type="term" value="P:UDP-N-acetylglucosamine biosynthetic process"/>
    <property type="evidence" value="ECO:0007669"/>
    <property type="project" value="TreeGrafter"/>
</dbReference>
<dbReference type="CDD" id="cd05802">
    <property type="entry name" value="GlmM"/>
    <property type="match status" value="1"/>
</dbReference>
<dbReference type="FunFam" id="3.30.310.50:FF:000001">
    <property type="entry name" value="Phosphoglucosamine mutase"/>
    <property type="match status" value="1"/>
</dbReference>
<dbReference type="FunFam" id="3.40.120.10:FF:000001">
    <property type="entry name" value="Phosphoglucosamine mutase"/>
    <property type="match status" value="1"/>
</dbReference>
<dbReference type="FunFam" id="3.40.120.10:FF:000002">
    <property type="entry name" value="Phosphoglucosamine mutase"/>
    <property type="match status" value="1"/>
</dbReference>
<dbReference type="Gene3D" id="3.40.120.10">
    <property type="entry name" value="Alpha-D-Glucose-1,6-Bisphosphate, subunit A, domain 3"/>
    <property type="match status" value="3"/>
</dbReference>
<dbReference type="Gene3D" id="3.30.310.50">
    <property type="entry name" value="Alpha-D-phosphohexomutase, C-terminal domain"/>
    <property type="match status" value="1"/>
</dbReference>
<dbReference type="HAMAP" id="MF_01554_B">
    <property type="entry name" value="GlmM_B"/>
    <property type="match status" value="1"/>
</dbReference>
<dbReference type="InterPro" id="IPR005844">
    <property type="entry name" value="A-D-PHexomutase_a/b/a-I"/>
</dbReference>
<dbReference type="InterPro" id="IPR016055">
    <property type="entry name" value="A-D-PHexomutase_a/b/a-I/II/III"/>
</dbReference>
<dbReference type="InterPro" id="IPR005845">
    <property type="entry name" value="A-D-PHexomutase_a/b/a-II"/>
</dbReference>
<dbReference type="InterPro" id="IPR005846">
    <property type="entry name" value="A-D-PHexomutase_a/b/a-III"/>
</dbReference>
<dbReference type="InterPro" id="IPR005843">
    <property type="entry name" value="A-D-PHexomutase_C"/>
</dbReference>
<dbReference type="InterPro" id="IPR036900">
    <property type="entry name" value="A-D-PHexomutase_C_sf"/>
</dbReference>
<dbReference type="InterPro" id="IPR016066">
    <property type="entry name" value="A-D-PHexomutase_CS"/>
</dbReference>
<dbReference type="InterPro" id="IPR005841">
    <property type="entry name" value="Alpha-D-phosphohexomutase_SF"/>
</dbReference>
<dbReference type="InterPro" id="IPR006352">
    <property type="entry name" value="GlmM_bact"/>
</dbReference>
<dbReference type="InterPro" id="IPR050060">
    <property type="entry name" value="Phosphoglucosamine_mutase"/>
</dbReference>
<dbReference type="NCBIfam" id="TIGR01455">
    <property type="entry name" value="glmM"/>
    <property type="match status" value="1"/>
</dbReference>
<dbReference type="NCBIfam" id="NF008139">
    <property type="entry name" value="PRK10887.1"/>
    <property type="match status" value="1"/>
</dbReference>
<dbReference type="PANTHER" id="PTHR42946:SF1">
    <property type="entry name" value="PHOSPHOGLUCOMUTASE (ALPHA-D-GLUCOSE-1,6-BISPHOSPHATE-DEPENDENT)"/>
    <property type="match status" value="1"/>
</dbReference>
<dbReference type="PANTHER" id="PTHR42946">
    <property type="entry name" value="PHOSPHOHEXOSE MUTASE"/>
    <property type="match status" value="1"/>
</dbReference>
<dbReference type="Pfam" id="PF02878">
    <property type="entry name" value="PGM_PMM_I"/>
    <property type="match status" value="1"/>
</dbReference>
<dbReference type="Pfam" id="PF02879">
    <property type="entry name" value="PGM_PMM_II"/>
    <property type="match status" value="1"/>
</dbReference>
<dbReference type="Pfam" id="PF02880">
    <property type="entry name" value="PGM_PMM_III"/>
    <property type="match status" value="1"/>
</dbReference>
<dbReference type="Pfam" id="PF00408">
    <property type="entry name" value="PGM_PMM_IV"/>
    <property type="match status" value="1"/>
</dbReference>
<dbReference type="PRINTS" id="PR00509">
    <property type="entry name" value="PGMPMM"/>
</dbReference>
<dbReference type="SUPFAM" id="SSF55957">
    <property type="entry name" value="Phosphoglucomutase, C-terminal domain"/>
    <property type="match status" value="1"/>
</dbReference>
<dbReference type="SUPFAM" id="SSF53738">
    <property type="entry name" value="Phosphoglucomutase, first 3 domains"/>
    <property type="match status" value="3"/>
</dbReference>
<dbReference type="PROSITE" id="PS00710">
    <property type="entry name" value="PGM_PMM"/>
    <property type="match status" value="1"/>
</dbReference>
<feature type="chain" id="PRO_1000087780" description="Phosphoglucosamine mutase">
    <location>
        <begin position="1"/>
        <end position="451"/>
    </location>
</feature>
<feature type="active site" description="Phosphoserine intermediate" evidence="1">
    <location>
        <position position="102"/>
    </location>
</feature>
<feature type="binding site" description="via phosphate group" evidence="1">
    <location>
        <position position="102"/>
    </location>
    <ligand>
        <name>Mg(2+)</name>
        <dbReference type="ChEBI" id="CHEBI:18420"/>
    </ligand>
</feature>
<feature type="binding site" evidence="1">
    <location>
        <position position="242"/>
    </location>
    <ligand>
        <name>Mg(2+)</name>
        <dbReference type="ChEBI" id="CHEBI:18420"/>
    </ligand>
</feature>
<feature type="binding site" evidence="1">
    <location>
        <position position="244"/>
    </location>
    <ligand>
        <name>Mg(2+)</name>
        <dbReference type="ChEBI" id="CHEBI:18420"/>
    </ligand>
</feature>
<feature type="binding site" evidence="1">
    <location>
        <position position="246"/>
    </location>
    <ligand>
        <name>Mg(2+)</name>
        <dbReference type="ChEBI" id="CHEBI:18420"/>
    </ligand>
</feature>
<feature type="modified residue" description="Phosphoserine" evidence="1">
    <location>
        <position position="102"/>
    </location>
</feature>
<proteinExistence type="inferred from homology"/>
<reference key="1">
    <citation type="submission" date="2007-06" db="EMBL/GenBank/DDBJ databases">
        <title>Complete sequence of chromosome of Staphylococcus aureus subsp. aureus JH1.</title>
        <authorList>
            <consortium name="US DOE Joint Genome Institute"/>
            <person name="Copeland A."/>
            <person name="Lucas S."/>
            <person name="Lapidus A."/>
            <person name="Barry K."/>
            <person name="Detter J.C."/>
            <person name="Glavina del Rio T."/>
            <person name="Hammon N."/>
            <person name="Israni S."/>
            <person name="Dalin E."/>
            <person name="Tice H."/>
            <person name="Pitluck S."/>
            <person name="Chain P."/>
            <person name="Malfatti S."/>
            <person name="Shin M."/>
            <person name="Vergez L."/>
            <person name="Schmutz J."/>
            <person name="Larimer F."/>
            <person name="Land M."/>
            <person name="Hauser L."/>
            <person name="Kyrpides N."/>
            <person name="Ivanova N."/>
            <person name="Tomasz A."/>
            <person name="Richardson P."/>
        </authorList>
    </citation>
    <scope>NUCLEOTIDE SEQUENCE [LARGE SCALE GENOMIC DNA]</scope>
    <source>
        <strain>JH1</strain>
    </source>
</reference>
<name>GLMM_STAA2</name>
<accession>A6U3P1</accession>
<keyword id="KW-0413">Isomerase</keyword>
<keyword id="KW-0460">Magnesium</keyword>
<keyword id="KW-0479">Metal-binding</keyword>
<keyword id="KW-0597">Phosphoprotein</keyword>
<organism>
    <name type="scientific">Staphylococcus aureus (strain JH1)</name>
    <dbReference type="NCBI Taxonomy" id="359787"/>
    <lineage>
        <taxon>Bacteria</taxon>
        <taxon>Bacillati</taxon>
        <taxon>Bacillota</taxon>
        <taxon>Bacilli</taxon>
        <taxon>Bacillales</taxon>
        <taxon>Staphylococcaceae</taxon>
        <taxon>Staphylococcus</taxon>
    </lineage>
</organism>
<comment type="function">
    <text evidence="1">Catalyzes the conversion of glucosamine-6-phosphate to glucosamine-1-phosphate.</text>
</comment>
<comment type="catalytic activity">
    <reaction evidence="1">
        <text>alpha-D-glucosamine 1-phosphate = D-glucosamine 6-phosphate</text>
        <dbReference type="Rhea" id="RHEA:23424"/>
        <dbReference type="ChEBI" id="CHEBI:58516"/>
        <dbReference type="ChEBI" id="CHEBI:58725"/>
        <dbReference type="EC" id="5.4.2.10"/>
    </reaction>
</comment>
<comment type="cofactor">
    <cofactor evidence="1">
        <name>Mg(2+)</name>
        <dbReference type="ChEBI" id="CHEBI:18420"/>
    </cofactor>
    <text evidence="1">Binds 1 Mg(2+) ion per subunit.</text>
</comment>
<comment type="PTM">
    <text evidence="1">Activated by phosphorylation.</text>
</comment>
<comment type="similarity">
    <text evidence="1">Belongs to the phosphohexose mutase family.</text>
</comment>
<protein>
    <recommendedName>
        <fullName evidence="1">Phosphoglucosamine mutase</fullName>
        <ecNumber evidence="1">5.4.2.10</ecNumber>
    </recommendedName>
</protein>
<evidence type="ECO:0000255" key="1">
    <source>
        <dbReference type="HAMAP-Rule" id="MF_01554"/>
    </source>
</evidence>